<evidence type="ECO:0000255" key="1">
    <source>
        <dbReference type="HAMAP-Rule" id="MF_00191"/>
    </source>
</evidence>
<proteinExistence type="inferred from homology"/>
<dbReference type="EC" id="1.17.7.4" evidence="1"/>
<dbReference type="EMBL" id="AE015925">
    <property type="protein sequence ID" value="AAP05485.1"/>
    <property type="molecule type" value="Genomic_DNA"/>
</dbReference>
<dbReference type="RefSeq" id="WP_011006699.1">
    <property type="nucleotide sequence ID" value="NC_003361.3"/>
</dbReference>
<dbReference type="SMR" id="Q822D9"/>
<dbReference type="STRING" id="227941.CCA_00744"/>
<dbReference type="KEGG" id="cca:CCA_00744"/>
<dbReference type="eggNOG" id="COG0761">
    <property type="taxonomic scope" value="Bacteria"/>
</dbReference>
<dbReference type="HOGENOM" id="CLU_027486_1_1_0"/>
<dbReference type="OrthoDB" id="9777362at2"/>
<dbReference type="UniPathway" id="UPA00056">
    <property type="reaction ID" value="UER00097"/>
</dbReference>
<dbReference type="UniPathway" id="UPA00059">
    <property type="reaction ID" value="UER00105"/>
</dbReference>
<dbReference type="Proteomes" id="UP000002193">
    <property type="component" value="Chromosome"/>
</dbReference>
<dbReference type="GO" id="GO:0051539">
    <property type="term" value="F:4 iron, 4 sulfur cluster binding"/>
    <property type="evidence" value="ECO:0007669"/>
    <property type="project" value="UniProtKB-UniRule"/>
</dbReference>
<dbReference type="GO" id="GO:0051745">
    <property type="term" value="F:4-hydroxy-3-methylbut-2-enyl diphosphate reductase activity"/>
    <property type="evidence" value="ECO:0007669"/>
    <property type="project" value="UniProtKB-UniRule"/>
</dbReference>
<dbReference type="GO" id="GO:0046872">
    <property type="term" value="F:metal ion binding"/>
    <property type="evidence" value="ECO:0007669"/>
    <property type="project" value="UniProtKB-KW"/>
</dbReference>
<dbReference type="GO" id="GO:0050992">
    <property type="term" value="P:dimethylallyl diphosphate biosynthetic process"/>
    <property type="evidence" value="ECO:0007669"/>
    <property type="project" value="UniProtKB-UniRule"/>
</dbReference>
<dbReference type="GO" id="GO:0019288">
    <property type="term" value="P:isopentenyl diphosphate biosynthetic process, methylerythritol 4-phosphate pathway"/>
    <property type="evidence" value="ECO:0007669"/>
    <property type="project" value="UniProtKB-UniRule"/>
</dbReference>
<dbReference type="GO" id="GO:0016114">
    <property type="term" value="P:terpenoid biosynthetic process"/>
    <property type="evidence" value="ECO:0007669"/>
    <property type="project" value="UniProtKB-UniRule"/>
</dbReference>
<dbReference type="CDD" id="cd13944">
    <property type="entry name" value="lytB_ispH"/>
    <property type="match status" value="1"/>
</dbReference>
<dbReference type="Gene3D" id="3.40.50.11270">
    <property type="match status" value="1"/>
</dbReference>
<dbReference type="Gene3D" id="3.40.1010.20">
    <property type="entry name" value="4-hydroxy-3-methylbut-2-enyl diphosphate reductase, catalytic domain"/>
    <property type="match status" value="2"/>
</dbReference>
<dbReference type="HAMAP" id="MF_00191">
    <property type="entry name" value="IspH"/>
    <property type="match status" value="1"/>
</dbReference>
<dbReference type="InterPro" id="IPR003451">
    <property type="entry name" value="LytB/IspH"/>
</dbReference>
<dbReference type="NCBIfam" id="TIGR00216">
    <property type="entry name" value="ispH_lytB"/>
    <property type="match status" value="1"/>
</dbReference>
<dbReference type="NCBIfam" id="NF002190">
    <property type="entry name" value="PRK01045.1-4"/>
    <property type="match status" value="1"/>
</dbReference>
<dbReference type="PANTHER" id="PTHR30426">
    <property type="entry name" value="4-HYDROXY-3-METHYLBUT-2-ENYL DIPHOSPHATE REDUCTASE"/>
    <property type="match status" value="1"/>
</dbReference>
<dbReference type="PANTHER" id="PTHR30426:SF0">
    <property type="entry name" value="4-HYDROXY-3-METHYLBUT-2-ENYL DIPHOSPHATE REDUCTASE"/>
    <property type="match status" value="1"/>
</dbReference>
<dbReference type="Pfam" id="PF02401">
    <property type="entry name" value="LYTB"/>
    <property type="match status" value="1"/>
</dbReference>
<comment type="function">
    <text evidence="1">Catalyzes the conversion of 1-hydroxy-2-methyl-2-(E)-butenyl 4-diphosphate (HMBPP) into a mixture of isopentenyl diphosphate (IPP) and dimethylallyl diphosphate (DMAPP). Acts in the terminal step of the DOXP/MEP pathway for isoprenoid precursor biosynthesis.</text>
</comment>
<comment type="catalytic activity">
    <reaction evidence="1">
        <text>isopentenyl diphosphate + 2 oxidized [2Fe-2S]-[ferredoxin] + H2O = (2E)-4-hydroxy-3-methylbut-2-enyl diphosphate + 2 reduced [2Fe-2S]-[ferredoxin] + 2 H(+)</text>
        <dbReference type="Rhea" id="RHEA:24488"/>
        <dbReference type="Rhea" id="RHEA-COMP:10000"/>
        <dbReference type="Rhea" id="RHEA-COMP:10001"/>
        <dbReference type="ChEBI" id="CHEBI:15377"/>
        <dbReference type="ChEBI" id="CHEBI:15378"/>
        <dbReference type="ChEBI" id="CHEBI:33737"/>
        <dbReference type="ChEBI" id="CHEBI:33738"/>
        <dbReference type="ChEBI" id="CHEBI:128753"/>
        <dbReference type="ChEBI" id="CHEBI:128769"/>
        <dbReference type="EC" id="1.17.7.4"/>
    </reaction>
</comment>
<comment type="catalytic activity">
    <reaction evidence="1">
        <text>dimethylallyl diphosphate + 2 oxidized [2Fe-2S]-[ferredoxin] + H2O = (2E)-4-hydroxy-3-methylbut-2-enyl diphosphate + 2 reduced [2Fe-2S]-[ferredoxin] + 2 H(+)</text>
        <dbReference type="Rhea" id="RHEA:24825"/>
        <dbReference type="Rhea" id="RHEA-COMP:10000"/>
        <dbReference type="Rhea" id="RHEA-COMP:10001"/>
        <dbReference type="ChEBI" id="CHEBI:15377"/>
        <dbReference type="ChEBI" id="CHEBI:15378"/>
        <dbReference type="ChEBI" id="CHEBI:33737"/>
        <dbReference type="ChEBI" id="CHEBI:33738"/>
        <dbReference type="ChEBI" id="CHEBI:57623"/>
        <dbReference type="ChEBI" id="CHEBI:128753"/>
        <dbReference type="EC" id="1.17.7.4"/>
    </reaction>
</comment>
<comment type="cofactor">
    <cofactor evidence="1">
        <name>[4Fe-4S] cluster</name>
        <dbReference type="ChEBI" id="CHEBI:49883"/>
    </cofactor>
    <text evidence="1">Binds 1 [4Fe-4S] cluster per subunit.</text>
</comment>
<comment type="pathway">
    <text evidence="1">Isoprenoid biosynthesis; dimethylallyl diphosphate biosynthesis; dimethylallyl diphosphate from (2E)-4-hydroxy-3-methylbutenyl diphosphate: step 1/1.</text>
</comment>
<comment type="pathway">
    <text evidence="1">Isoprenoid biosynthesis; isopentenyl diphosphate biosynthesis via DXP pathway; isopentenyl diphosphate from 1-deoxy-D-xylulose 5-phosphate: step 6/6.</text>
</comment>
<comment type="similarity">
    <text evidence="1">Belongs to the IspH family.</text>
</comment>
<keyword id="KW-0004">4Fe-4S</keyword>
<keyword id="KW-0408">Iron</keyword>
<keyword id="KW-0411">Iron-sulfur</keyword>
<keyword id="KW-0414">Isoprene biosynthesis</keyword>
<keyword id="KW-0479">Metal-binding</keyword>
<keyword id="KW-0560">Oxidoreductase</keyword>
<organism>
    <name type="scientific">Chlamydia caviae (strain ATCC VR-813 / DSM 19441 / 03DC25 / GPIC)</name>
    <name type="common">Chlamydophila caviae</name>
    <dbReference type="NCBI Taxonomy" id="227941"/>
    <lineage>
        <taxon>Bacteria</taxon>
        <taxon>Pseudomonadati</taxon>
        <taxon>Chlamydiota</taxon>
        <taxon>Chlamydiia</taxon>
        <taxon>Chlamydiales</taxon>
        <taxon>Chlamydiaceae</taxon>
        <taxon>Chlamydia/Chlamydophila group</taxon>
        <taxon>Chlamydia</taxon>
    </lineage>
</organism>
<feature type="chain" id="PRO_0000128799" description="4-hydroxy-3-methylbut-2-enyl diphosphate reductase">
    <location>
        <begin position="1"/>
        <end position="309"/>
    </location>
</feature>
<feature type="active site" description="Proton donor" evidence="1">
    <location>
        <position position="127"/>
    </location>
</feature>
<feature type="binding site" evidence="1">
    <location>
        <position position="13"/>
    </location>
    <ligand>
        <name>[4Fe-4S] cluster</name>
        <dbReference type="ChEBI" id="CHEBI:49883"/>
    </ligand>
</feature>
<feature type="binding site" evidence="1">
    <location>
        <position position="42"/>
    </location>
    <ligand>
        <name>(2E)-4-hydroxy-3-methylbut-2-enyl diphosphate</name>
        <dbReference type="ChEBI" id="CHEBI:128753"/>
    </ligand>
</feature>
<feature type="binding site" evidence="1">
    <location>
        <position position="42"/>
    </location>
    <ligand>
        <name>dimethylallyl diphosphate</name>
        <dbReference type="ChEBI" id="CHEBI:57623"/>
    </ligand>
</feature>
<feature type="binding site" evidence="1">
    <location>
        <position position="42"/>
    </location>
    <ligand>
        <name>isopentenyl diphosphate</name>
        <dbReference type="ChEBI" id="CHEBI:128769"/>
    </ligand>
</feature>
<feature type="binding site" evidence="1">
    <location>
        <position position="75"/>
    </location>
    <ligand>
        <name>(2E)-4-hydroxy-3-methylbut-2-enyl diphosphate</name>
        <dbReference type="ChEBI" id="CHEBI:128753"/>
    </ligand>
</feature>
<feature type="binding site" evidence="1">
    <location>
        <position position="75"/>
    </location>
    <ligand>
        <name>dimethylallyl diphosphate</name>
        <dbReference type="ChEBI" id="CHEBI:57623"/>
    </ligand>
</feature>
<feature type="binding site" evidence="1">
    <location>
        <position position="75"/>
    </location>
    <ligand>
        <name>isopentenyl diphosphate</name>
        <dbReference type="ChEBI" id="CHEBI:128769"/>
    </ligand>
</feature>
<feature type="binding site" evidence="1">
    <location>
        <position position="97"/>
    </location>
    <ligand>
        <name>[4Fe-4S] cluster</name>
        <dbReference type="ChEBI" id="CHEBI:49883"/>
    </ligand>
</feature>
<feature type="binding site" evidence="1">
    <location>
        <position position="125"/>
    </location>
    <ligand>
        <name>(2E)-4-hydroxy-3-methylbut-2-enyl diphosphate</name>
        <dbReference type="ChEBI" id="CHEBI:128753"/>
    </ligand>
</feature>
<feature type="binding site" evidence="1">
    <location>
        <position position="125"/>
    </location>
    <ligand>
        <name>dimethylallyl diphosphate</name>
        <dbReference type="ChEBI" id="CHEBI:57623"/>
    </ligand>
</feature>
<feature type="binding site" evidence="1">
    <location>
        <position position="125"/>
    </location>
    <ligand>
        <name>isopentenyl diphosphate</name>
        <dbReference type="ChEBI" id="CHEBI:128769"/>
    </ligand>
</feature>
<feature type="binding site" evidence="1">
    <location>
        <position position="165"/>
    </location>
    <ligand>
        <name>(2E)-4-hydroxy-3-methylbut-2-enyl diphosphate</name>
        <dbReference type="ChEBI" id="CHEBI:128753"/>
    </ligand>
</feature>
<feature type="binding site" evidence="1">
    <location>
        <position position="195"/>
    </location>
    <ligand>
        <name>[4Fe-4S] cluster</name>
        <dbReference type="ChEBI" id="CHEBI:49883"/>
    </ligand>
</feature>
<feature type="binding site" evidence="1">
    <location>
        <position position="223"/>
    </location>
    <ligand>
        <name>(2E)-4-hydroxy-3-methylbut-2-enyl diphosphate</name>
        <dbReference type="ChEBI" id="CHEBI:128753"/>
    </ligand>
</feature>
<feature type="binding site" evidence="1">
    <location>
        <position position="223"/>
    </location>
    <ligand>
        <name>dimethylallyl diphosphate</name>
        <dbReference type="ChEBI" id="CHEBI:57623"/>
    </ligand>
</feature>
<feature type="binding site" evidence="1">
    <location>
        <position position="223"/>
    </location>
    <ligand>
        <name>isopentenyl diphosphate</name>
        <dbReference type="ChEBI" id="CHEBI:128769"/>
    </ligand>
</feature>
<feature type="binding site" evidence="1">
    <location>
        <position position="224"/>
    </location>
    <ligand>
        <name>(2E)-4-hydroxy-3-methylbut-2-enyl diphosphate</name>
        <dbReference type="ChEBI" id="CHEBI:128753"/>
    </ligand>
</feature>
<feature type="binding site" evidence="1">
    <location>
        <position position="224"/>
    </location>
    <ligand>
        <name>dimethylallyl diphosphate</name>
        <dbReference type="ChEBI" id="CHEBI:57623"/>
    </ligand>
</feature>
<feature type="binding site" evidence="1">
    <location>
        <position position="224"/>
    </location>
    <ligand>
        <name>isopentenyl diphosphate</name>
        <dbReference type="ChEBI" id="CHEBI:128769"/>
    </ligand>
</feature>
<feature type="binding site" evidence="1">
    <location>
        <position position="225"/>
    </location>
    <ligand>
        <name>(2E)-4-hydroxy-3-methylbut-2-enyl diphosphate</name>
        <dbReference type="ChEBI" id="CHEBI:128753"/>
    </ligand>
</feature>
<feature type="binding site" evidence="1">
    <location>
        <position position="225"/>
    </location>
    <ligand>
        <name>dimethylallyl diphosphate</name>
        <dbReference type="ChEBI" id="CHEBI:57623"/>
    </ligand>
</feature>
<feature type="binding site" evidence="1">
    <location>
        <position position="225"/>
    </location>
    <ligand>
        <name>isopentenyl diphosphate</name>
        <dbReference type="ChEBI" id="CHEBI:128769"/>
    </ligand>
</feature>
<feature type="binding site" evidence="1">
    <location>
        <position position="267"/>
    </location>
    <ligand>
        <name>(2E)-4-hydroxy-3-methylbut-2-enyl diphosphate</name>
        <dbReference type="ChEBI" id="CHEBI:128753"/>
    </ligand>
</feature>
<feature type="binding site" evidence="1">
    <location>
        <position position="267"/>
    </location>
    <ligand>
        <name>dimethylallyl diphosphate</name>
        <dbReference type="ChEBI" id="CHEBI:57623"/>
    </ligand>
</feature>
<feature type="binding site" evidence="1">
    <location>
        <position position="267"/>
    </location>
    <ligand>
        <name>isopentenyl diphosphate</name>
        <dbReference type="ChEBI" id="CHEBI:128769"/>
    </ligand>
</feature>
<gene>
    <name evidence="1" type="primary">ispH</name>
    <name type="ordered locus">CCA_00744</name>
</gene>
<protein>
    <recommendedName>
        <fullName evidence="1">4-hydroxy-3-methylbut-2-enyl diphosphate reductase</fullName>
        <shortName evidence="1">HMBPP reductase</shortName>
        <ecNumber evidence="1">1.17.7.4</ecNumber>
    </recommendedName>
</protein>
<sequence length="309" mass="34487">MRRVILNNPRGFCAGVVRAIQVVETALEKWGAPIYVKHEIVHNRHVVDDLKRRGAIFIEDLSDVPSGEKVVYSAHGIPPEVREEARTRNLFDIDATCVLVTKIHSAVKLYASKGYQIILIGKKKHVEVIGIRGEAPESVTVVEKVEDVANLPFEESVPLFFVTQTTLSLDDVAEITQALKVRYPHIITLPSSSVCYATQNRQEALRSVLPKVNFVYVIGDVQSSNSNRLREVAEKRNIPARLVNSPDHISDEILNYSGDIAITAGASTPEHIVQSCISRLKELIPDLQVEEDIFAIEDVVFQPPKELRN</sequence>
<name>ISPH_CHLCV</name>
<reference key="1">
    <citation type="journal article" date="2003" name="Nucleic Acids Res.">
        <title>Genome sequence of Chlamydophila caviae (Chlamydia psittaci GPIC): examining the role of niche-specific genes in the evolution of the Chlamydiaceae.</title>
        <authorList>
            <person name="Read T.D."/>
            <person name="Myers G.S.A."/>
            <person name="Brunham R.C."/>
            <person name="Nelson W.C."/>
            <person name="Paulsen I.T."/>
            <person name="Heidelberg J.F."/>
            <person name="Holtzapple E.K."/>
            <person name="Khouri H.M."/>
            <person name="Federova N.B."/>
            <person name="Carty H.A."/>
            <person name="Umayam L.A."/>
            <person name="Haft D.H."/>
            <person name="Peterson J.D."/>
            <person name="Beanan M.J."/>
            <person name="White O."/>
            <person name="Salzberg S.L."/>
            <person name="Hsia R.-C."/>
            <person name="McClarty G."/>
            <person name="Rank R.G."/>
            <person name="Bavoil P.M."/>
            <person name="Fraser C.M."/>
        </authorList>
    </citation>
    <scope>NUCLEOTIDE SEQUENCE [LARGE SCALE GENOMIC DNA]</scope>
    <source>
        <strain>ATCC VR-813 / DSM 19441 / 03DC25 / GPIC</strain>
    </source>
</reference>
<accession>Q822D9</accession>